<accession>A6Q693</accession>
<sequence>MRVKTGVVRHRRHKRLLKQARGFYSGRRKHFRKAKEQLERSLVYAYRDRRQKKRDFRKLWIVRINAAARLNDLNYSRFMHGLKLANIELDRKILADMAMNSPESFTKIADASKAALTK</sequence>
<organism>
    <name type="scientific">Sulfurovum sp. (strain NBC37-1)</name>
    <dbReference type="NCBI Taxonomy" id="387093"/>
    <lineage>
        <taxon>Bacteria</taxon>
        <taxon>Pseudomonadati</taxon>
        <taxon>Campylobacterota</taxon>
        <taxon>Epsilonproteobacteria</taxon>
        <taxon>Campylobacterales</taxon>
        <taxon>Sulfurovaceae</taxon>
        <taxon>Sulfurovum</taxon>
    </lineage>
</organism>
<protein>
    <recommendedName>
        <fullName evidence="1">Large ribosomal subunit protein bL20</fullName>
    </recommendedName>
    <alternativeName>
        <fullName evidence="2">50S ribosomal protein L20</fullName>
    </alternativeName>
</protein>
<feature type="chain" id="PRO_0000355478" description="Large ribosomal subunit protein bL20">
    <location>
        <begin position="1"/>
        <end position="118"/>
    </location>
</feature>
<proteinExistence type="inferred from homology"/>
<gene>
    <name evidence="1" type="primary">rplT</name>
    <name type="ordered locus">SUN_0042</name>
</gene>
<comment type="function">
    <text evidence="1">Binds directly to 23S ribosomal RNA and is necessary for the in vitro assembly process of the 50S ribosomal subunit. It is not involved in the protein synthesizing functions of that subunit.</text>
</comment>
<comment type="similarity">
    <text evidence="1">Belongs to the bacterial ribosomal protein bL20 family.</text>
</comment>
<reference key="1">
    <citation type="journal article" date="2007" name="Proc. Natl. Acad. Sci. U.S.A.">
        <title>Deep-sea vent epsilon-proteobacterial genomes provide insights into emergence of pathogens.</title>
        <authorList>
            <person name="Nakagawa S."/>
            <person name="Takaki Y."/>
            <person name="Shimamura S."/>
            <person name="Reysenbach A.-L."/>
            <person name="Takai K."/>
            <person name="Horikoshi K."/>
        </authorList>
    </citation>
    <scope>NUCLEOTIDE SEQUENCE [LARGE SCALE GENOMIC DNA]</scope>
    <source>
        <strain>NBC37-1</strain>
    </source>
</reference>
<dbReference type="EMBL" id="AP009179">
    <property type="protein sequence ID" value="BAF71002.1"/>
    <property type="molecule type" value="Genomic_DNA"/>
</dbReference>
<dbReference type="RefSeq" id="WP_011979735.1">
    <property type="nucleotide sequence ID" value="NC_009663.1"/>
</dbReference>
<dbReference type="SMR" id="A6Q693"/>
<dbReference type="STRING" id="387093.SUN_0042"/>
<dbReference type="KEGG" id="sun:SUN_0042"/>
<dbReference type="eggNOG" id="COG0292">
    <property type="taxonomic scope" value="Bacteria"/>
</dbReference>
<dbReference type="HOGENOM" id="CLU_123265_0_1_7"/>
<dbReference type="OrthoDB" id="9808966at2"/>
<dbReference type="Proteomes" id="UP000006378">
    <property type="component" value="Chromosome"/>
</dbReference>
<dbReference type="GO" id="GO:1990904">
    <property type="term" value="C:ribonucleoprotein complex"/>
    <property type="evidence" value="ECO:0007669"/>
    <property type="project" value="UniProtKB-KW"/>
</dbReference>
<dbReference type="GO" id="GO:0005840">
    <property type="term" value="C:ribosome"/>
    <property type="evidence" value="ECO:0007669"/>
    <property type="project" value="UniProtKB-KW"/>
</dbReference>
<dbReference type="GO" id="GO:0019843">
    <property type="term" value="F:rRNA binding"/>
    <property type="evidence" value="ECO:0007669"/>
    <property type="project" value="UniProtKB-UniRule"/>
</dbReference>
<dbReference type="GO" id="GO:0003735">
    <property type="term" value="F:structural constituent of ribosome"/>
    <property type="evidence" value="ECO:0007669"/>
    <property type="project" value="InterPro"/>
</dbReference>
<dbReference type="GO" id="GO:0000027">
    <property type="term" value="P:ribosomal large subunit assembly"/>
    <property type="evidence" value="ECO:0007669"/>
    <property type="project" value="UniProtKB-UniRule"/>
</dbReference>
<dbReference type="GO" id="GO:0006412">
    <property type="term" value="P:translation"/>
    <property type="evidence" value="ECO:0007669"/>
    <property type="project" value="InterPro"/>
</dbReference>
<dbReference type="CDD" id="cd07026">
    <property type="entry name" value="Ribosomal_L20"/>
    <property type="match status" value="1"/>
</dbReference>
<dbReference type="FunFam" id="1.10.1900.20:FF:000001">
    <property type="entry name" value="50S ribosomal protein L20"/>
    <property type="match status" value="1"/>
</dbReference>
<dbReference type="Gene3D" id="6.10.160.10">
    <property type="match status" value="1"/>
</dbReference>
<dbReference type="Gene3D" id="1.10.1900.20">
    <property type="entry name" value="Ribosomal protein L20"/>
    <property type="match status" value="1"/>
</dbReference>
<dbReference type="HAMAP" id="MF_00382">
    <property type="entry name" value="Ribosomal_bL20"/>
    <property type="match status" value="1"/>
</dbReference>
<dbReference type="InterPro" id="IPR005813">
    <property type="entry name" value="Ribosomal_bL20"/>
</dbReference>
<dbReference type="InterPro" id="IPR049946">
    <property type="entry name" value="RIBOSOMAL_L20_CS"/>
</dbReference>
<dbReference type="InterPro" id="IPR035566">
    <property type="entry name" value="Ribosomal_protein_bL20_C"/>
</dbReference>
<dbReference type="NCBIfam" id="TIGR01032">
    <property type="entry name" value="rplT_bact"/>
    <property type="match status" value="1"/>
</dbReference>
<dbReference type="PANTHER" id="PTHR10986">
    <property type="entry name" value="39S RIBOSOMAL PROTEIN L20"/>
    <property type="match status" value="1"/>
</dbReference>
<dbReference type="Pfam" id="PF00453">
    <property type="entry name" value="Ribosomal_L20"/>
    <property type="match status" value="1"/>
</dbReference>
<dbReference type="PRINTS" id="PR00062">
    <property type="entry name" value="RIBOSOMALL20"/>
</dbReference>
<dbReference type="SUPFAM" id="SSF74731">
    <property type="entry name" value="Ribosomal protein L20"/>
    <property type="match status" value="1"/>
</dbReference>
<dbReference type="PROSITE" id="PS00937">
    <property type="entry name" value="RIBOSOMAL_L20"/>
    <property type="match status" value="1"/>
</dbReference>
<evidence type="ECO:0000255" key="1">
    <source>
        <dbReference type="HAMAP-Rule" id="MF_00382"/>
    </source>
</evidence>
<evidence type="ECO:0000305" key="2"/>
<name>RL20_SULNB</name>
<keyword id="KW-0687">Ribonucleoprotein</keyword>
<keyword id="KW-0689">Ribosomal protein</keyword>
<keyword id="KW-0694">RNA-binding</keyword>
<keyword id="KW-0699">rRNA-binding</keyword>